<name>TUBR_PRIM1</name>
<accession>Q848W2</accession>
<proteinExistence type="evidence at protein level"/>
<feature type="chain" id="PRO_0000448566" description="DNA-binding protein TubR">
    <location>
        <begin position="1"/>
        <end position="101"/>
    </location>
</feature>
<feature type="helix" evidence="5">
    <location>
        <begin position="3"/>
        <end position="10"/>
    </location>
</feature>
<feature type="helix" evidence="5">
    <location>
        <begin position="14"/>
        <end position="25"/>
    </location>
</feature>
<feature type="helix" evidence="5">
    <location>
        <begin position="31"/>
        <end position="33"/>
    </location>
</feature>
<feature type="helix" evidence="5">
    <location>
        <begin position="37"/>
        <end position="41"/>
    </location>
</feature>
<feature type="helix" evidence="5">
    <location>
        <begin position="49"/>
        <end position="60"/>
    </location>
</feature>
<feature type="strand" evidence="5">
    <location>
        <begin position="64"/>
        <end position="67"/>
    </location>
</feature>
<feature type="strand" evidence="5">
    <location>
        <begin position="69"/>
        <end position="72"/>
    </location>
</feature>
<feature type="strand" evidence="5">
    <location>
        <begin position="74"/>
        <end position="77"/>
    </location>
</feature>
<feature type="helix" evidence="5">
    <location>
        <begin position="79"/>
        <end position="88"/>
    </location>
</feature>
<sequence>MSDYFEEVMRKLTIEDVSILGWLFQNEANAVFKAIKKSSIADELEYSTANFRKTLNKLEAIHFIGTVTGGKEHKLYLTEYGQQAVQQAIHHGEENEEVEEI</sequence>
<evidence type="ECO:0000269" key="1">
    <source>
    </source>
</evidence>
<evidence type="ECO:0000303" key="2">
    <source>
    </source>
</evidence>
<evidence type="ECO:0000305" key="3"/>
<evidence type="ECO:0007744" key="4">
    <source>
        <dbReference type="PDB" id="4ASN"/>
    </source>
</evidence>
<evidence type="ECO:0007829" key="5">
    <source>
        <dbReference type="PDB" id="4ASN"/>
    </source>
</evidence>
<keyword id="KW-0002">3D-structure</keyword>
<keyword id="KW-0238">DNA-binding</keyword>
<keyword id="KW-0614">Plasmid</keyword>
<keyword id="KW-0616">Plasmid partition</keyword>
<keyword id="KW-1185">Reference proteome</keyword>
<comment type="function">
    <text evidence="1 3">A DNA-binding protein that is part of the type III plasmid partition system used to ensure correct segregation of the pBM400 plasmid. Binds the plasmid origin of replication, probably cooperatively, forming a ring or short helix with external DNA (PubMed:23010931). Its effect on RNA expression has not been shown (Probable).</text>
</comment>
<comment type="subunit">
    <text evidence="1">Homodimer. Dimers bind to DNA, forming a protein-bound filament which may form a helix around the TubZ filament.</text>
</comment>
<dbReference type="EMBL" id="CP001987">
    <property type="protein sequence ID" value="AAO52804.1"/>
    <property type="molecule type" value="Genomic_DNA"/>
</dbReference>
<dbReference type="RefSeq" id="WP_011106199.1">
    <property type="nucleotide sequence ID" value="NC_004604.2"/>
</dbReference>
<dbReference type="PDB" id="4ASN">
    <property type="method" value="X-ray"/>
    <property type="resolution" value="3.50 A"/>
    <property type="chains" value="A/B/C=1-101"/>
</dbReference>
<dbReference type="PDBsum" id="4ASN"/>
<dbReference type="SMR" id="Q848W2"/>
<dbReference type="KEGG" id="bmq:BMQ_pBM40059"/>
<dbReference type="HOGENOM" id="CLU_2380079_0_0_9"/>
<dbReference type="EvolutionaryTrace" id="Q848W2"/>
<dbReference type="Proteomes" id="UP000000935">
    <property type="component" value="Plasmid pBM400"/>
</dbReference>
<dbReference type="GO" id="GO:0003677">
    <property type="term" value="F:DNA binding"/>
    <property type="evidence" value="ECO:0007669"/>
    <property type="project" value="UniProtKB-KW"/>
</dbReference>
<dbReference type="GO" id="GO:0030541">
    <property type="term" value="P:plasmid partitioning"/>
    <property type="evidence" value="ECO:0007669"/>
    <property type="project" value="UniProtKB-KW"/>
</dbReference>
<dbReference type="Gene3D" id="1.10.10.10">
    <property type="entry name" value="Winged helix-like DNA-binding domain superfamily/Winged helix DNA-binding domain"/>
    <property type="match status" value="1"/>
</dbReference>
<dbReference type="InterPro" id="IPR036388">
    <property type="entry name" value="WH-like_DNA-bd_sf"/>
</dbReference>
<dbReference type="InterPro" id="IPR036390">
    <property type="entry name" value="WH_DNA-bd_sf"/>
</dbReference>
<dbReference type="SUPFAM" id="SSF46785">
    <property type="entry name" value="Winged helix' DNA-binding domain"/>
    <property type="match status" value="1"/>
</dbReference>
<organism>
    <name type="scientific">Priestia megaterium (strain ATCC 12872 / QMB1551)</name>
    <name type="common">Bacillus megaterium</name>
    <dbReference type="NCBI Taxonomy" id="545693"/>
    <lineage>
        <taxon>Bacteria</taxon>
        <taxon>Bacillati</taxon>
        <taxon>Bacillota</taxon>
        <taxon>Bacilli</taxon>
        <taxon>Bacillales</taxon>
        <taxon>Bacillaceae</taxon>
        <taxon>Priestia</taxon>
    </lineage>
</organism>
<gene>
    <name evidence="2" type="primary">tubR</name>
    <name type="ordered locus">BMQ_pBM40059</name>
</gene>
<protein>
    <recommendedName>
        <fullName evidence="2">DNA-binding protein TubR</fullName>
    </recommendedName>
</protein>
<reference key="1">
    <citation type="journal article" date="2003" name="Appl. Environ. Microbiol.">
        <title>Sequencing and characterization of pBM400 from Bacillus megaterium QM B1551.</title>
        <authorList>
            <person name="Scholle M.D."/>
            <person name="White C.A."/>
            <person name="Kunnimalaiyaan M."/>
            <person name="Vary P.S."/>
        </authorList>
    </citation>
    <scope>NUCLEOTIDE SEQUENCE [LARGE SCALE GENOMIC DNA]</scope>
    <source>
        <strain>ATCC 12872 / DSM 1804 / QMB1551</strain>
        <plasmid>pBM400</plasmid>
    </source>
</reference>
<reference key="2">
    <citation type="journal article" date="2011" name="J. Bacteriol.">
        <title>Genome sequences of the biotechnologically important Bacillus megaterium strains QM B1551 and DSM319.</title>
        <authorList>
            <person name="Eppinger M."/>
            <person name="Bunk B."/>
            <person name="Johns M.A."/>
            <person name="Edirisinghe J.N."/>
            <person name="Kutumbaka K.K."/>
            <person name="Koenig S.S."/>
            <person name="Creasy H.H."/>
            <person name="Rosovitz M.J."/>
            <person name="Riley D.R."/>
            <person name="Daugherty S."/>
            <person name="Martin M."/>
            <person name="Elbourne L.D."/>
            <person name="Paulsen I."/>
            <person name="Biedendieck R."/>
            <person name="Braun C."/>
            <person name="Grayburn S."/>
            <person name="Dhingra S."/>
            <person name="Lukyanchuk V."/>
            <person name="Ball B."/>
            <person name="Ul-Qamar R."/>
            <person name="Seibel J."/>
            <person name="Bremer E."/>
            <person name="Jahn D."/>
            <person name="Ravel J."/>
            <person name="Vary P.S."/>
        </authorList>
    </citation>
    <scope>NUCLEOTIDE SEQUENCE [LARGE SCALE GENOMIC DNA]</scope>
    <source>
        <strain>ATCC 12872 / DSM 1804 / QMB1551</strain>
        <plasmid>pBM400</plasmid>
    </source>
</reference>
<reference evidence="4" key="3">
    <citation type="journal article" date="2012" name="Proc. Natl. Acad. Sci. U.S.A.">
        <title>Superstructure of the centromeric complex of TubZRC plasmid partitioning systems.</title>
        <authorList>
            <person name="Aylett C.H."/>
            <person name="Lowe J."/>
        </authorList>
    </citation>
    <scope>X-RAY CRYSTALLOGRAPHY (3.50 ANGSTROMS)</scope>
    <scope>FUNCTION</scope>
    <scope>SUBUNIT</scope>
    <scope>DNA-BINDING</scope>
    <source>
        <strain>ATCC 12872 / DSM 1804 / QMB1551</strain>
        <plasmid>pBM400</plasmid>
    </source>
</reference>
<geneLocation type="plasmid">
    <name>pBM400</name>
</geneLocation>